<feature type="chain" id="PRO_0000052708" description="Hemoglobin subunit alpha-1/2">
    <location>
        <begin position="1"/>
        <end position="141"/>
    </location>
</feature>
<feature type="domain" description="Globin" evidence="3">
    <location>
        <begin position="1"/>
        <end position="141"/>
    </location>
</feature>
<feature type="binding site" evidence="3">
    <location>
        <position position="58"/>
    </location>
    <ligand>
        <name>O2</name>
        <dbReference type="ChEBI" id="CHEBI:15379"/>
    </ligand>
</feature>
<feature type="binding site" description="proximal binding residue" evidence="3">
    <location>
        <position position="87"/>
    </location>
    <ligand>
        <name>heme b</name>
        <dbReference type="ChEBI" id="CHEBI:60344"/>
    </ligand>
    <ligandPart>
        <name>Fe</name>
        <dbReference type="ChEBI" id="CHEBI:18248"/>
    </ligandPart>
</feature>
<feature type="modified residue" description="Phosphoserine" evidence="2">
    <location>
        <position position="3"/>
    </location>
</feature>
<feature type="modified residue" description="N6-succinyllysine" evidence="1">
    <location>
        <position position="7"/>
    </location>
</feature>
<feature type="modified residue" description="N6-succinyllysine" evidence="1">
    <location>
        <position position="11"/>
    </location>
</feature>
<feature type="modified residue" description="N6-acetyllysine; alternate" evidence="2">
    <location>
        <position position="16"/>
    </location>
</feature>
<feature type="modified residue" description="N6-succinyllysine; alternate" evidence="1">
    <location>
        <position position="16"/>
    </location>
</feature>
<feature type="modified residue" description="Phosphotyrosine" evidence="2">
    <location>
        <position position="24"/>
    </location>
</feature>
<feature type="modified residue" description="Phosphoserine" evidence="2">
    <location>
        <position position="35"/>
    </location>
</feature>
<feature type="modified residue" description="N6-succinyllysine" evidence="1">
    <location>
        <position position="40"/>
    </location>
</feature>
<feature type="modified residue" description="Phosphoserine" evidence="2">
    <location>
        <position position="49"/>
    </location>
</feature>
<feature type="modified residue" description="Phosphoserine" evidence="1">
    <location>
        <position position="102"/>
    </location>
</feature>
<feature type="modified residue" description="Phosphothreonine" evidence="1">
    <location>
        <position position="108"/>
    </location>
</feature>
<feature type="modified residue" description="Phosphoserine" evidence="1">
    <location>
        <position position="124"/>
    </location>
</feature>
<feature type="modified residue" description="Phosphothreonine" evidence="1">
    <location>
        <position position="134"/>
    </location>
</feature>
<feature type="modified residue" description="Phosphothreonine" evidence="1">
    <location>
        <position position="137"/>
    </location>
</feature>
<feature type="modified residue" description="Phosphoserine" evidence="1">
    <location>
        <position position="138"/>
    </location>
</feature>
<feature type="sequence variant" description="In alpha-1*2 chain.">
    <original>A</original>
    <variation>T</variation>
    <location>
        <position position="5"/>
    </location>
</feature>
<feature type="sequence variant" description="In alpha-2 chain.">
    <original>N</original>
    <variation>K</variation>
    <location>
        <position position="20"/>
    </location>
</feature>
<feature type="sequence variant" description="In alpha-2 chain and alpha-1*3 chain.">
    <original>Y</original>
    <variation>F</variation>
    <location>
        <position position="24"/>
    </location>
</feature>
<feature type="helix" evidence="4">
    <location>
        <begin position="4"/>
        <end position="14"/>
    </location>
</feature>
<feature type="turn" evidence="4">
    <location>
        <begin position="15"/>
        <end position="17"/>
    </location>
</feature>
<feature type="helix" evidence="4">
    <location>
        <begin position="22"/>
        <end position="28"/>
    </location>
</feature>
<feature type="turn" evidence="4">
    <location>
        <begin position="33"/>
        <end position="35"/>
    </location>
</feature>
<feature type="helix" evidence="4">
    <location>
        <begin position="40"/>
        <end position="42"/>
    </location>
</feature>
<feature type="helix" evidence="4">
    <location>
        <begin position="54"/>
        <end position="69"/>
    </location>
</feature>
<feature type="helix" evidence="4">
    <location>
        <begin position="76"/>
        <end position="79"/>
    </location>
</feature>
<feature type="turn" evidence="4">
    <location>
        <begin position="81"/>
        <end position="83"/>
    </location>
</feature>
<feature type="helix" evidence="4">
    <location>
        <begin position="84"/>
        <end position="88"/>
    </location>
</feature>
<feature type="turn" evidence="4">
    <location>
        <begin position="89"/>
        <end position="91"/>
    </location>
</feature>
<feature type="helix" evidence="4">
    <location>
        <begin position="95"/>
        <end position="97"/>
    </location>
</feature>
<feature type="helix" evidence="4">
    <location>
        <begin position="98"/>
        <end position="112"/>
    </location>
</feature>
<feature type="turn" evidence="4">
    <location>
        <begin position="114"/>
        <end position="116"/>
    </location>
</feature>
<feature type="helix" evidence="4">
    <location>
        <begin position="119"/>
        <end position="135"/>
    </location>
</feature>
<feature type="turn" evidence="4">
    <location>
        <begin position="136"/>
        <end position="139"/>
    </location>
</feature>
<protein>
    <recommendedName>
        <fullName>Hemoglobin subunit alpha-1/2</fullName>
    </recommendedName>
    <alternativeName>
        <fullName>Alpha-1/2-globin</fullName>
    </alternativeName>
    <alternativeName>
        <fullName>Hemoglobin alpha-1/2 chain</fullName>
    </alternativeName>
</protein>
<organism>
    <name type="scientific">Odocoileus virginianus virginianus</name>
    <name type="common">Virginia white-tailed deer</name>
    <dbReference type="NCBI Taxonomy" id="9875"/>
    <lineage>
        <taxon>Eukaryota</taxon>
        <taxon>Metazoa</taxon>
        <taxon>Chordata</taxon>
        <taxon>Craniata</taxon>
        <taxon>Vertebrata</taxon>
        <taxon>Euteleostomi</taxon>
        <taxon>Mammalia</taxon>
        <taxon>Eutheria</taxon>
        <taxon>Laurasiatheria</taxon>
        <taxon>Artiodactyla</taxon>
        <taxon>Ruminantia</taxon>
        <taxon>Pecora</taxon>
        <taxon>Cervidae</taxon>
        <taxon>Odocoileinae</taxon>
        <taxon>Odocoileus</taxon>
    </lineage>
</organism>
<evidence type="ECO:0000250" key="1">
    <source>
        <dbReference type="UniProtKB" id="P01942"/>
    </source>
</evidence>
<evidence type="ECO:0000250" key="2">
    <source>
        <dbReference type="UniProtKB" id="P69905"/>
    </source>
</evidence>
<evidence type="ECO:0000255" key="3">
    <source>
        <dbReference type="PROSITE-ProRule" id="PRU00238"/>
    </source>
</evidence>
<evidence type="ECO:0007829" key="4">
    <source>
        <dbReference type="PDB" id="1HDS"/>
    </source>
</evidence>
<name>HBA_ODOVI</name>
<keyword id="KW-0002">3D-structure</keyword>
<keyword id="KW-0007">Acetylation</keyword>
<keyword id="KW-0903">Direct protein sequencing</keyword>
<keyword id="KW-0349">Heme</keyword>
<keyword id="KW-0408">Iron</keyword>
<keyword id="KW-0479">Metal-binding</keyword>
<keyword id="KW-0561">Oxygen transport</keyword>
<keyword id="KW-0597">Phosphoprotein</keyword>
<keyword id="KW-0813">Transport</keyword>
<accession>P01972</accession>
<dbReference type="PIR" id="A02296">
    <property type="entry name" value="HADE1V"/>
</dbReference>
<dbReference type="PDB" id="1HDS">
    <property type="method" value="X-ray"/>
    <property type="resolution" value="1.98 A"/>
    <property type="chains" value="A/C=1-141"/>
</dbReference>
<dbReference type="PDBsum" id="1HDS"/>
<dbReference type="SMR" id="P01972"/>
<dbReference type="EvolutionaryTrace" id="P01972"/>
<dbReference type="GO" id="GO:0072562">
    <property type="term" value="C:blood microparticle"/>
    <property type="evidence" value="ECO:0007669"/>
    <property type="project" value="TreeGrafter"/>
</dbReference>
<dbReference type="GO" id="GO:0031838">
    <property type="term" value="C:haptoglobin-hemoglobin complex"/>
    <property type="evidence" value="ECO:0007669"/>
    <property type="project" value="TreeGrafter"/>
</dbReference>
<dbReference type="GO" id="GO:0005833">
    <property type="term" value="C:hemoglobin complex"/>
    <property type="evidence" value="ECO:0007669"/>
    <property type="project" value="InterPro"/>
</dbReference>
<dbReference type="GO" id="GO:0031720">
    <property type="term" value="F:haptoglobin binding"/>
    <property type="evidence" value="ECO:0007669"/>
    <property type="project" value="TreeGrafter"/>
</dbReference>
<dbReference type="GO" id="GO:0020037">
    <property type="term" value="F:heme binding"/>
    <property type="evidence" value="ECO:0007669"/>
    <property type="project" value="InterPro"/>
</dbReference>
<dbReference type="GO" id="GO:0046872">
    <property type="term" value="F:metal ion binding"/>
    <property type="evidence" value="ECO:0007669"/>
    <property type="project" value="UniProtKB-KW"/>
</dbReference>
<dbReference type="GO" id="GO:0043177">
    <property type="term" value="F:organic acid binding"/>
    <property type="evidence" value="ECO:0007669"/>
    <property type="project" value="TreeGrafter"/>
</dbReference>
<dbReference type="GO" id="GO:0019825">
    <property type="term" value="F:oxygen binding"/>
    <property type="evidence" value="ECO:0007669"/>
    <property type="project" value="InterPro"/>
</dbReference>
<dbReference type="GO" id="GO:0005344">
    <property type="term" value="F:oxygen carrier activity"/>
    <property type="evidence" value="ECO:0007669"/>
    <property type="project" value="UniProtKB-KW"/>
</dbReference>
<dbReference type="GO" id="GO:0004601">
    <property type="term" value="F:peroxidase activity"/>
    <property type="evidence" value="ECO:0007669"/>
    <property type="project" value="TreeGrafter"/>
</dbReference>
<dbReference type="GO" id="GO:0042744">
    <property type="term" value="P:hydrogen peroxide catabolic process"/>
    <property type="evidence" value="ECO:0007669"/>
    <property type="project" value="TreeGrafter"/>
</dbReference>
<dbReference type="CDD" id="cd08927">
    <property type="entry name" value="Hb-alpha-like"/>
    <property type="match status" value="1"/>
</dbReference>
<dbReference type="FunFam" id="1.10.490.10:FF:000002">
    <property type="entry name" value="Hemoglobin subunit alpha"/>
    <property type="match status" value="1"/>
</dbReference>
<dbReference type="Gene3D" id="1.10.490.10">
    <property type="entry name" value="Globins"/>
    <property type="match status" value="1"/>
</dbReference>
<dbReference type="InterPro" id="IPR000971">
    <property type="entry name" value="Globin"/>
</dbReference>
<dbReference type="InterPro" id="IPR009050">
    <property type="entry name" value="Globin-like_sf"/>
</dbReference>
<dbReference type="InterPro" id="IPR012292">
    <property type="entry name" value="Globin/Proto"/>
</dbReference>
<dbReference type="InterPro" id="IPR002338">
    <property type="entry name" value="Hemoglobin_a-typ"/>
</dbReference>
<dbReference type="InterPro" id="IPR050056">
    <property type="entry name" value="Hemoglobin_oxygen_transport"/>
</dbReference>
<dbReference type="PANTHER" id="PTHR11442">
    <property type="entry name" value="HEMOGLOBIN FAMILY MEMBER"/>
    <property type="match status" value="1"/>
</dbReference>
<dbReference type="PANTHER" id="PTHR11442:SF48">
    <property type="entry name" value="HEMOGLOBIN SUBUNIT ALPHA"/>
    <property type="match status" value="1"/>
</dbReference>
<dbReference type="Pfam" id="PF00042">
    <property type="entry name" value="Globin"/>
    <property type="match status" value="1"/>
</dbReference>
<dbReference type="PRINTS" id="PR00612">
    <property type="entry name" value="ALPHAHAEM"/>
</dbReference>
<dbReference type="SUPFAM" id="SSF46458">
    <property type="entry name" value="Globin-like"/>
    <property type="match status" value="1"/>
</dbReference>
<dbReference type="PROSITE" id="PS01033">
    <property type="entry name" value="GLOBIN"/>
    <property type="match status" value="1"/>
</dbReference>
<sequence length="141" mass="15127">VLSAABKSBVKAAWGKVGGNAAPYGAZALZRMFLSFPTTKTYFPHFBLSHGSAZVKAHGZKVABALTKAVGHLBBLPGTLSBLSBLHAHKLRVBPVBFKLLSHSLLVTLATHLPBBFTPAVHASLBKFLABVSTVLTSKYR</sequence>
<reference key="1">
    <citation type="journal article" date="1972" name="Arch. Biochem. Biophys.">
        <title>Structural studies of hemoglobin alpha-chains from Virginia white-tailed deer.</title>
        <authorList>
            <person name="Harris M.J."/>
            <person name="Wilson J.B."/>
            <person name="Huisman T.H.J."/>
        </authorList>
    </citation>
    <scope>PROTEIN SEQUENCE</scope>
</reference>
<reference key="2">
    <citation type="journal article" date="1977" name="Acta Crystallogr. B">
        <title>The structure of sickling deer type III hemoglobin by molecular replacement.</title>
        <authorList>
            <person name="Schmidt W.C. Jr."/>
            <person name="Girling R.L."/>
            <person name="Houston T.E."/>
            <person name="Sproul G.D."/>
            <person name="Amma E.L."/>
            <person name="Huisman T.H.J."/>
        </authorList>
    </citation>
    <scope>X-RAY CRYSTALLOGRAPHY (1.98 ANGSTROMS)</scope>
</reference>
<comment type="function">
    <text>Involved in oxygen transport from the lung to the various peripheral tissues.</text>
</comment>
<comment type="subunit">
    <text>Heterotetramer of two alpha chains and two beta chains.</text>
</comment>
<comment type="tissue specificity">
    <text>Red blood cells.</text>
</comment>
<comment type="polymorphism">
    <text>There are three alleles of the alpha-1 chain (alpha-1*1, alpha-1*2 and alpha-1*3). The sequence shown is alpha-1*1. The alpha-2 chain is non-allelic.</text>
</comment>
<comment type="similarity">
    <text evidence="3">Belongs to the globin family.</text>
</comment>
<proteinExistence type="evidence at protein level"/>